<evidence type="ECO:0000250" key="1"/>
<evidence type="ECO:0000305" key="2"/>
<dbReference type="EC" id="6.3.5.-"/>
<dbReference type="EMBL" id="L77117">
    <property type="protein sequence ID" value="AAB98144.1"/>
    <property type="molecule type" value="Genomic_DNA"/>
</dbReference>
<dbReference type="PIR" id="A64320">
    <property type="entry name" value="A64320"/>
</dbReference>
<dbReference type="SMR" id="Q57624"/>
<dbReference type="FunCoup" id="Q57624">
    <property type="interactions" value="165"/>
</dbReference>
<dbReference type="STRING" id="243232.MJ_0160"/>
<dbReference type="PaxDb" id="243232-MJ_0160"/>
<dbReference type="EnsemblBacteria" id="AAB98144">
    <property type="protein sequence ID" value="AAB98144"/>
    <property type="gene ID" value="MJ_0160"/>
</dbReference>
<dbReference type="KEGG" id="mja:MJ_0160"/>
<dbReference type="eggNOG" id="arCOG01718">
    <property type="taxonomic scope" value="Archaea"/>
</dbReference>
<dbReference type="HOGENOM" id="CLU_019240_0_0_2"/>
<dbReference type="InParanoid" id="Q57624"/>
<dbReference type="PhylomeDB" id="Q57624"/>
<dbReference type="Proteomes" id="UP000000805">
    <property type="component" value="Chromosome"/>
</dbReference>
<dbReference type="GO" id="GO:0050566">
    <property type="term" value="F:asparaginyl-tRNA synthase (glutamine-hydrolyzing) activity"/>
    <property type="evidence" value="ECO:0007669"/>
    <property type="project" value="RHEA"/>
</dbReference>
<dbReference type="GO" id="GO:0005524">
    <property type="term" value="F:ATP binding"/>
    <property type="evidence" value="ECO:0007669"/>
    <property type="project" value="UniProtKB-KW"/>
</dbReference>
<dbReference type="GO" id="GO:0050567">
    <property type="term" value="F:glutaminyl-tRNA synthase (glutamine-hydrolyzing) activity"/>
    <property type="evidence" value="ECO:0000318"/>
    <property type="project" value="GO_Central"/>
</dbReference>
<dbReference type="GO" id="GO:0070681">
    <property type="term" value="P:glutaminyl-tRNAGln biosynthesis via transamidation"/>
    <property type="evidence" value="ECO:0000318"/>
    <property type="project" value="GO_Central"/>
</dbReference>
<dbReference type="GO" id="GO:0006412">
    <property type="term" value="P:translation"/>
    <property type="evidence" value="ECO:0007669"/>
    <property type="project" value="UniProtKB-UniRule"/>
</dbReference>
<dbReference type="FunFam" id="1.10.10.410:FF:000001">
    <property type="entry name" value="Aspartyl/glutamyl-tRNA(Asn/Gln) amidotransferase subunit B"/>
    <property type="match status" value="1"/>
</dbReference>
<dbReference type="Gene3D" id="1.10.10.410">
    <property type="match status" value="1"/>
</dbReference>
<dbReference type="Gene3D" id="1.10.150.380">
    <property type="entry name" value="GatB domain, N-terminal subdomain"/>
    <property type="match status" value="1"/>
</dbReference>
<dbReference type="HAMAP" id="MF_00121">
    <property type="entry name" value="GatB"/>
    <property type="match status" value="1"/>
</dbReference>
<dbReference type="InterPro" id="IPR017959">
    <property type="entry name" value="Asn/Gln-tRNA_amidoTrfase_suB/E"/>
</dbReference>
<dbReference type="InterPro" id="IPR006075">
    <property type="entry name" value="Asn/Gln-tRNA_Trfase_suB/E_cat"/>
</dbReference>
<dbReference type="InterPro" id="IPR018027">
    <property type="entry name" value="Asn/Gln_amidotransferase"/>
</dbReference>
<dbReference type="InterPro" id="IPR003789">
    <property type="entry name" value="Asn/Gln_tRNA_amidoTrase-B-like"/>
</dbReference>
<dbReference type="InterPro" id="IPR004413">
    <property type="entry name" value="GatB"/>
</dbReference>
<dbReference type="InterPro" id="IPR042114">
    <property type="entry name" value="GatB_C_1"/>
</dbReference>
<dbReference type="InterPro" id="IPR023168">
    <property type="entry name" value="GatB_Yqey_C_2"/>
</dbReference>
<dbReference type="InterPro" id="IPR017958">
    <property type="entry name" value="Gln-tRNA_amidoTrfase_suB_CS"/>
</dbReference>
<dbReference type="InterPro" id="IPR014746">
    <property type="entry name" value="Gln_synth/guanido_kin_cat_dom"/>
</dbReference>
<dbReference type="NCBIfam" id="TIGR00133">
    <property type="entry name" value="gatB"/>
    <property type="match status" value="1"/>
</dbReference>
<dbReference type="NCBIfam" id="NF004012">
    <property type="entry name" value="PRK05477.1-2"/>
    <property type="match status" value="1"/>
</dbReference>
<dbReference type="NCBIfam" id="NF004014">
    <property type="entry name" value="PRK05477.1-4"/>
    <property type="match status" value="1"/>
</dbReference>
<dbReference type="PANTHER" id="PTHR11659">
    <property type="entry name" value="GLUTAMYL-TRNA GLN AMIDOTRANSFERASE SUBUNIT B MITOCHONDRIAL AND PROKARYOTIC PET112-RELATED"/>
    <property type="match status" value="1"/>
</dbReference>
<dbReference type="PANTHER" id="PTHR11659:SF0">
    <property type="entry name" value="GLUTAMYL-TRNA(GLN) AMIDOTRANSFERASE SUBUNIT B, MITOCHONDRIAL"/>
    <property type="match status" value="1"/>
</dbReference>
<dbReference type="Pfam" id="PF02934">
    <property type="entry name" value="GatB_N"/>
    <property type="match status" value="1"/>
</dbReference>
<dbReference type="Pfam" id="PF02637">
    <property type="entry name" value="GatB_Yqey"/>
    <property type="match status" value="1"/>
</dbReference>
<dbReference type="SMART" id="SM00845">
    <property type="entry name" value="GatB_Yqey"/>
    <property type="match status" value="1"/>
</dbReference>
<dbReference type="SUPFAM" id="SSF89095">
    <property type="entry name" value="GatB/YqeY motif"/>
    <property type="match status" value="1"/>
</dbReference>
<dbReference type="SUPFAM" id="SSF55931">
    <property type="entry name" value="Glutamine synthetase/guanido kinase"/>
    <property type="match status" value="1"/>
</dbReference>
<dbReference type="PROSITE" id="PS01234">
    <property type="entry name" value="GATB"/>
    <property type="match status" value="1"/>
</dbReference>
<organism>
    <name type="scientific">Methanocaldococcus jannaschii (strain ATCC 43067 / DSM 2661 / JAL-1 / JCM 10045 / NBRC 100440)</name>
    <name type="common">Methanococcus jannaschii</name>
    <dbReference type="NCBI Taxonomy" id="243232"/>
    <lineage>
        <taxon>Archaea</taxon>
        <taxon>Methanobacteriati</taxon>
        <taxon>Methanobacteriota</taxon>
        <taxon>Methanomada group</taxon>
        <taxon>Methanococci</taxon>
        <taxon>Methanococcales</taxon>
        <taxon>Methanocaldococcaceae</taxon>
        <taxon>Methanocaldococcus</taxon>
    </lineage>
</organism>
<proteinExistence type="inferred from homology"/>
<reference key="1">
    <citation type="journal article" date="1996" name="Science">
        <title>Complete genome sequence of the methanogenic archaeon, Methanococcus jannaschii.</title>
        <authorList>
            <person name="Bult C.J."/>
            <person name="White O."/>
            <person name="Olsen G.J."/>
            <person name="Zhou L."/>
            <person name="Fleischmann R.D."/>
            <person name="Sutton G.G."/>
            <person name="Blake J.A."/>
            <person name="FitzGerald L.M."/>
            <person name="Clayton R.A."/>
            <person name="Gocayne J.D."/>
            <person name="Kerlavage A.R."/>
            <person name="Dougherty B.A."/>
            <person name="Tomb J.-F."/>
            <person name="Adams M.D."/>
            <person name="Reich C.I."/>
            <person name="Overbeek R."/>
            <person name="Kirkness E.F."/>
            <person name="Weinstock K.G."/>
            <person name="Merrick J.M."/>
            <person name="Glodek A."/>
            <person name="Scott J.L."/>
            <person name="Geoghagen N.S.M."/>
            <person name="Weidman J.F."/>
            <person name="Fuhrmann J.L."/>
            <person name="Nguyen D."/>
            <person name="Utterback T.R."/>
            <person name="Kelley J.M."/>
            <person name="Peterson J.D."/>
            <person name="Sadow P.W."/>
            <person name="Hanna M.C."/>
            <person name="Cotton M.D."/>
            <person name="Roberts K.M."/>
            <person name="Hurst M.A."/>
            <person name="Kaine B.P."/>
            <person name="Borodovsky M."/>
            <person name="Klenk H.-P."/>
            <person name="Fraser C.M."/>
            <person name="Smith H.O."/>
            <person name="Woese C.R."/>
            <person name="Venter J.C."/>
        </authorList>
    </citation>
    <scope>NUCLEOTIDE SEQUENCE [LARGE SCALE GENOMIC DNA]</scope>
    <source>
        <strain>ATCC 43067 / DSM 2661 / JAL-1 / JCM 10045 / NBRC 100440</strain>
    </source>
</reference>
<name>GATB_METJA</name>
<accession>Q57624</accession>
<feature type="chain" id="PRO_0000148871" description="Aspartyl/glutamyl-tRNA(Asn/Gln) amidotransferase subunit B">
    <location>
        <begin position="1"/>
        <end position="472"/>
    </location>
</feature>
<comment type="function">
    <text evidence="1">Allows the formation of correctly charged Asn-tRNA(Asn) or Gln-tRNA(Gln) through the transamidation of misacylated Asp-tRNA(Asn) or Glu-tRNA(Gln) in organisms which lack either or both of asparaginyl-tRNA or glutaminyl-tRNA synthetases. The reaction takes place in the presence of glutamine and ATP through an activated phospho-Asp-tRNA(Asn) or phospho-Glu-tRNA(Gln) (By similarity).</text>
</comment>
<comment type="catalytic activity">
    <reaction>
        <text>L-glutamyl-tRNA(Gln) + L-glutamine + ATP + H2O = L-glutaminyl-tRNA(Gln) + L-glutamate + ADP + phosphate + H(+)</text>
        <dbReference type="Rhea" id="RHEA:17521"/>
        <dbReference type="Rhea" id="RHEA-COMP:9681"/>
        <dbReference type="Rhea" id="RHEA-COMP:9684"/>
        <dbReference type="ChEBI" id="CHEBI:15377"/>
        <dbReference type="ChEBI" id="CHEBI:15378"/>
        <dbReference type="ChEBI" id="CHEBI:29985"/>
        <dbReference type="ChEBI" id="CHEBI:30616"/>
        <dbReference type="ChEBI" id="CHEBI:43474"/>
        <dbReference type="ChEBI" id="CHEBI:58359"/>
        <dbReference type="ChEBI" id="CHEBI:78520"/>
        <dbReference type="ChEBI" id="CHEBI:78521"/>
        <dbReference type="ChEBI" id="CHEBI:456216"/>
    </reaction>
</comment>
<comment type="catalytic activity">
    <reaction>
        <text>L-aspartyl-tRNA(Asn) + L-glutamine + ATP + H2O = L-asparaginyl-tRNA(Asn) + L-glutamate + ADP + phosphate + 2 H(+)</text>
        <dbReference type="Rhea" id="RHEA:14513"/>
        <dbReference type="Rhea" id="RHEA-COMP:9674"/>
        <dbReference type="Rhea" id="RHEA-COMP:9677"/>
        <dbReference type="ChEBI" id="CHEBI:15377"/>
        <dbReference type="ChEBI" id="CHEBI:15378"/>
        <dbReference type="ChEBI" id="CHEBI:29985"/>
        <dbReference type="ChEBI" id="CHEBI:30616"/>
        <dbReference type="ChEBI" id="CHEBI:43474"/>
        <dbReference type="ChEBI" id="CHEBI:58359"/>
        <dbReference type="ChEBI" id="CHEBI:78515"/>
        <dbReference type="ChEBI" id="CHEBI:78516"/>
        <dbReference type="ChEBI" id="CHEBI:456216"/>
    </reaction>
</comment>
<comment type="subunit">
    <text evidence="1">Heterotrimer of A, B and C subunits.</text>
</comment>
<comment type="similarity">
    <text evidence="2">Belongs to the GatB/GatE family. GatB subfamily.</text>
</comment>
<protein>
    <recommendedName>
        <fullName>Aspartyl/glutamyl-tRNA(Asn/Gln) amidotransferase subunit B</fullName>
        <shortName>Asp/Glu-ADT subunit B</shortName>
        <ecNumber>6.3.5.-</ecNumber>
    </recommendedName>
</protein>
<keyword id="KW-0067">ATP-binding</keyword>
<keyword id="KW-0436">Ligase</keyword>
<keyword id="KW-0547">Nucleotide-binding</keyword>
<keyword id="KW-0648">Protein biosynthesis</keyword>
<keyword id="KW-1185">Reference proteome</keyword>
<sequence length="472" mass="53736">MGGNMEDVKMKCGLEIHVQIDTKSKLFCNCSTNYLDAEPNTNVCPVCLGLPGAKPLPPNKKAVEVAIMVAKMLGCKIVVDEDIYFQRKHYDYPDLPSGYQRTSTPIGVDGEFMGIGIHEVHLEEDPGQYNPSFGIVDYNRSGTPLIEIVTKPDIKSPEEAREFLKQLMTLFRYLGCLRGEGTMRADVNISIEYMGVQGNRVEVKNVNSIKGVYKVLKYELIRQKNIIKRGGEVKRETRAFLESQMITKAMRSKETAEDYRYIPDPDIQPIVISEKWVKEIEEKMPETPLAKKKRFVEEYGIDEEDAKVLVSDLDMAEMFEEVVKSLGVNKENVDLAVTWIRNELRRSLQYHKVDLYESGVKAEHIVELIKLIKEGVISQKIAKEIVDLLVINRGKKMPKELVEELGLTVIRDEDALVKAVEEAIKNNPKAVEDYLNGKKEALNFLMGQVMRLTRGRADPKRVIELLKERLDK</sequence>
<gene>
    <name type="primary">gatB</name>
    <name type="ordered locus">MJ0160</name>
</gene>